<evidence type="ECO:0000250" key="1">
    <source>
        <dbReference type="UniProtKB" id="A0A0D4WTV1"/>
    </source>
</evidence>
<evidence type="ECO:0000250" key="2">
    <source>
        <dbReference type="UniProtKB" id="A0A0D4WV12"/>
    </source>
</evidence>
<evidence type="ECO:0000250" key="3">
    <source>
        <dbReference type="UniProtKB" id="P0CE80"/>
    </source>
</evidence>
<evidence type="ECO:0000250" key="4">
    <source>
        <dbReference type="UniProtKB" id="Q4ZFU2"/>
    </source>
</evidence>
<evidence type="ECO:0000250" key="5">
    <source>
        <dbReference type="UniProtKB" id="Q8I914"/>
    </source>
</evidence>
<evidence type="ECO:0000303" key="6">
    <source>
    </source>
</evidence>
<evidence type="ECO:0000305" key="7"/>
<evidence type="ECO:0000305" key="8">
    <source>
    </source>
</evidence>
<dbReference type="EC" id="4.6.1.-" evidence="4"/>
<dbReference type="EMBL" id="FJ171489">
    <property type="protein sequence ID" value="ACN48985.1"/>
    <property type="molecule type" value="mRNA"/>
</dbReference>
<dbReference type="SMR" id="C0JB54"/>
<dbReference type="GO" id="GO:0005576">
    <property type="term" value="C:extracellular region"/>
    <property type="evidence" value="ECO:0007669"/>
    <property type="project" value="UniProtKB-SubCell"/>
</dbReference>
<dbReference type="GO" id="GO:0016829">
    <property type="term" value="F:lyase activity"/>
    <property type="evidence" value="ECO:0007669"/>
    <property type="project" value="UniProtKB-KW"/>
</dbReference>
<dbReference type="GO" id="GO:0046872">
    <property type="term" value="F:metal ion binding"/>
    <property type="evidence" value="ECO:0007669"/>
    <property type="project" value="UniProtKB-KW"/>
</dbReference>
<dbReference type="GO" id="GO:0008081">
    <property type="term" value="F:phosphoric diester hydrolase activity"/>
    <property type="evidence" value="ECO:0007669"/>
    <property type="project" value="InterPro"/>
</dbReference>
<dbReference type="GO" id="GO:0090729">
    <property type="term" value="F:toxin activity"/>
    <property type="evidence" value="ECO:0007669"/>
    <property type="project" value="UniProtKB-KW"/>
</dbReference>
<dbReference type="GO" id="GO:0031640">
    <property type="term" value="P:killing of cells of another organism"/>
    <property type="evidence" value="ECO:0007669"/>
    <property type="project" value="UniProtKB-KW"/>
</dbReference>
<dbReference type="GO" id="GO:0016042">
    <property type="term" value="P:lipid catabolic process"/>
    <property type="evidence" value="ECO:0007669"/>
    <property type="project" value="UniProtKB-KW"/>
</dbReference>
<dbReference type="CDD" id="cd08576">
    <property type="entry name" value="GDPD_like_SMaseD_PLD"/>
    <property type="match status" value="1"/>
</dbReference>
<dbReference type="Gene3D" id="3.20.20.190">
    <property type="entry name" value="Phosphatidylinositol (PI) phosphodiesterase"/>
    <property type="match status" value="1"/>
</dbReference>
<dbReference type="InterPro" id="IPR017946">
    <property type="entry name" value="PLC-like_Pdiesterase_TIM-brl"/>
</dbReference>
<dbReference type="SUPFAM" id="SSF51695">
    <property type="entry name" value="PLC-like phosphodiesterases"/>
    <property type="match status" value="1"/>
</dbReference>
<reference key="1">
    <citation type="journal article" date="2009" name="Mol. Biol. Evol.">
        <title>Molecular evolution, functional variation, and proposed nomenclature of the gene family that includes sphingomyelinase D in sicariid spider venoms.</title>
        <authorList>
            <person name="Binford G.J."/>
            <person name="Bodner M.R."/>
            <person name="Cordes M.H."/>
            <person name="Baldwin K.L."/>
            <person name="Rynerson M.R."/>
            <person name="Burns S.N."/>
            <person name="Zobel-Thropp P.A."/>
        </authorList>
    </citation>
    <scope>NUCLEOTIDE SEQUENCE [MRNA]</scope>
    <scope>NOMENCLATURE</scope>
    <source>
        <tissue>Venom gland</tissue>
    </source>
</reference>
<protein>
    <recommendedName>
        <fullName evidence="6">Dermonecrotic toxin StSicTox-betaIF1</fullName>
        <ecNumber evidence="4">4.6.1.-</ecNumber>
    </recommendedName>
    <alternativeName>
        <fullName>Phospholipase D</fullName>
        <shortName>PLD</shortName>
    </alternativeName>
    <alternativeName>
        <fullName>Sphingomyelin phosphodiesterase D</fullName>
        <shortName>SMD</shortName>
        <shortName>SMase D</shortName>
        <shortName>Sphingomyelinase D</shortName>
    </alternativeName>
</protein>
<feature type="chain" id="PRO_0000392870" description="Dermonecrotic toxin StSicTox-betaIF1">
    <location>
        <begin position="1" status="less than"/>
        <end position="272"/>
    </location>
</feature>
<feature type="active site" evidence="5">
    <location>
        <position position="5"/>
    </location>
</feature>
<feature type="active site" description="Nucleophile" evidence="5">
    <location>
        <position position="41"/>
    </location>
</feature>
<feature type="binding site" evidence="5">
    <location>
        <position position="25"/>
    </location>
    <ligand>
        <name>Mg(2+)</name>
        <dbReference type="ChEBI" id="CHEBI:18420"/>
    </ligand>
</feature>
<feature type="binding site" evidence="5">
    <location>
        <position position="27"/>
    </location>
    <ligand>
        <name>Mg(2+)</name>
        <dbReference type="ChEBI" id="CHEBI:18420"/>
    </ligand>
</feature>
<feature type="binding site" evidence="5">
    <location>
        <position position="85"/>
    </location>
    <ligand>
        <name>Mg(2+)</name>
        <dbReference type="ChEBI" id="CHEBI:18420"/>
    </ligand>
</feature>
<feature type="disulfide bond" evidence="3">
    <location>
        <begin position="45"/>
        <end position="51"/>
    </location>
</feature>
<feature type="disulfide bond" evidence="3">
    <location>
        <begin position="47"/>
        <end position="189"/>
    </location>
</feature>
<feature type="non-terminal residue">
    <location>
        <position position="1"/>
    </location>
</feature>
<name>B1V_SICTE</name>
<sequence>WIMGHMVNDLEMVDYYVDKGANGLEIDITFNSNGIAEYTYHGVPCDCFRNCRRNTTLSTYLNYVRQLTTPGDQKFRQNLIFIIMDLKLNRLKSQALFNAGLSIADRLTQYYWKDDGKARAYFLLSVPYVRQAAFIRGFQSRFEEKGLKKYYEKIGWDFSANEDLNRIREAYQKLNISGHIWQSDGITNCLTRRTRRLKEAIRKRDSPGWYINKVYSWSLDRYKSIKYALDLGVDGVMSNYADRLVKILSKGTYKRRFRLATHEDNPWETFTP</sequence>
<comment type="function">
    <text evidence="1 3">Dermonecrotic toxins cleave the phosphodiester linkage between the phosphate and headgroup of certain phospholipids (sphingolipid and lysolipid substrates), forming an alcohol (often choline) and a cyclic phosphate (By similarity). This toxin acts on sphingomyelin (SM) (By similarity). It may also act on ceramide phosphoethanolamine (CPE), lysophosphatidylcholine (LPC) and lysophosphatidylethanolamine (LPE), but not on lysophosphatidylserine (LPS), and lysophosphatidylglycerol (LPG) (By similarity). It acts by transphosphatidylation, releasing exclusively cyclic phosphate products as second products (By similarity). Induces dermonecrosis, hemolysis, increased vascular permeability, edema, inflammatory response, and platelet aggregation (By similarity).</text>
</comment>
<comment type="catalytic activity">
    <reaction evidence="1">
        <text>an N-(acyl)-sphingosylphosphocholine = an N-(acyl)-sphingosyl-1,3-cyclic phosphate + choline</text>
        <dbReference type="Rhea" id="RHEA:60652"/>
        <dbReference type="ChEBI" id="CHEBI:15354"/>
        <dbReference type="ChEBI" id="CHEBI:64583"/>
        <dbReference type="ChEBI" id="CHEBI:143892"/>
    </reaction>
</comment>
<comment type="catalytic activity">
    <reaction evidence="1">
        <text>an N-(acyl)-sphingosylphosphoethanolamine = an N-(acyl)-sphingosyl-1,3-cyclic phosphate + ethanolamine</text>
        <dbReference type="Rhea" id="RHEA:60648"/>
        <dbReference type="ChEBI" id="CHEBI:57603"/>
        <dbReference type="ChEBI" id="CHEBI:143891"/>
        <dbReference type="ChEBI" id="CHEBI:143892"/>
    </reaction>
</comment>
<comment type="catalytic activity">
    <reaction evidence="1">
        <text>a 1-acyl-sn-glycero-3-phosphocholine = a 1-acyl-sn-glycero-2,3-cyclic phosphate + choline</text>
        <dbReference type="Rhea" id="RHEA:60700"/>
        <dbReference type="ChEBI" id="CHEBI:15354"/>
        <dbReference type="ChEBI" id="CHEBI:58168"/>
        <dbReference type="ChEBI" id="CHEBI:143947"/>
    </reaction>
</comment>
<comment type="catalytic activity">
    <reaction evidence="1">
        <text>a 1-acyl-sn-glycero-3-phosphoethanolamine = a 1-acyl-sn-glycero-2,3-cyclic phosphate + ethanolamine</text>
        <dbReference type="Rhea" id="RHEA:60704"/>
        <dbReference type="ChEBI" id="CHEBI:57603"/>
        <dbReference type="ChEBI" id="CHEBI:64381"/>
        <dbReference type="ChEBI" id="CHEBI:143947"/>
    </reaction>
</comment>
<comment type="cofactor">
    <cofactor evidence="5">
        <name>Mg(2+)</name>
        <dbReference type="ChEBI" id="CHEBI:18420"/>
    </cofactor>
    <text evidence="5">Binds 1 Mg(2+) ion per subunit.</text>
</comment>
<comment type="subcellular location">
    <subcellularLocation>
        <location evidence="8">Secreted</location>
    </subcellularLocation>
</comment>
<comment type="tissue specificity">
    <text evidence="8">Expressed by the venom gland.</text>
</comment>
<comment type="similarity">
    <text evidence="7">Belongs to the arthropod phospholipase D family. Class II subfamily.</text>
</comment>
<comment type="caution">
    <text evidence="1 2 4">The most common activity assay for dermonecrotic toxins detects enzymatic activity by monitoring choline release from substrate. Liberation of choline from sphingomyelin (SM) or lysophosphatidylcholine (LPC) is commonly assumed to result from substrate hydrolysis, giving either ceramide-1-phosphate (C1P) or lysophosphatidic acid (LPA), respectively, as a second product. However, two studies from Lajoie and colleagues (2013 and 2015) report the observation of exclusive formation of cyclic phosphate products as second products, resulting from intramolecular transphosphatidylation. Cyclic phosphates have vastly different biological properties from their monoester counterparts, and they may be relevant to the pathology of brown spider envenomation.</text>
</comment>
<proteinExistence type="evidence at transcript level"/>
<organism>
    <name type="scientific">Sicarius terrosus</name>
    <name type="common">Cave spider</name>
    <dbReference type="NCBI Taxonomy" id="571544"/>
    <lineage>
        <taxon>Eukaryota</taxon>
        <taxon>Metazoa</taxon>
        <taxon>Ecdysozoa</taxon>
        <taxon>Arthropoda</taxon>
        <taxon>Chelicerata</taxon>
        <taxon>Arachnida</taxon>
        <taxon>Araneae</taxon>
        <taxon>Araneomorphae</taxon>
        <taxon>Haplogynae</taxon>
        <taxon>Scytodoidea</taxon>
        <taxon>Sicariidae</taxon>
        <taxon>Sicarius</taxon>
    </lineage>
</organism>
<accession>C0JB54</accession>
<keyword id="KW-0204">Cytolysis</keyword>
<keyword id="KW-1061">Dermonecrotic toxin</keyword>
<keyword id="KW-1015">Disulfide bond</keyword>
<keyword id="KW-0354">Hemolysis</keyword>
<keyword id="KW-0442">Lipid degradation</keyword>
<keyword id="KW-0443">Lipid metabolism</keyword>
<keyword id="KW-0456">Lyase</keyword>
<keyword id="KW-0460">Magnesium</keyword>
<keyword id="KW-0479">Metal-binding</keyword>
<keyword id="KW-0964">Secreted</keyword>
<keyword id="KW-0800">Toxin</keyword>